<gene>
    <name evidence="2" type="primary">GYPB</name>
    <name type="synonym">GPB</name>
</gene>
<reference key="1">
    <citation type="journal article" date="1995" name="J. Mol. Evol.">
        <title>Sequence diversification and exon inactivation in the glycophorin A gene family from chimpanzee to human.</title>
        <authorList>
            <person name="Huang C.-H."/>
            <person name="Xie S.S."/>
            <person name="Socha W."/>
            <person name="Blumenfeld O.O."/>
        </authorList>
    </citation>
    <scope>NUCLEOTIDE SEQUENCE [MRNA]</scope>
</reference>
<comment type="function">
    <text evidence="2">Component of the ankyrin-1 complex, a multiprotein complex involved in the stability and shape of the erythrocyte membrane.</text>
</comment>
<comment type="subunit">
    <text evidence="2">Component of the ankyrin-1 complex in the erythrocyte, composed of ANK1, RHCE, RHAG, SLC4A1, EPB42, GYPA, GYPB and AQP1. Interacts (via the N-terminal) with RHAG; this interaction bridges the (RHAG)2(RHCE) heterotrimer with the SLC4A1 Band 3 I dimer complexed with GYPA.</text>
</comment>
<comment type="subcellular location">
    <subcellularLocation>
        <location>Cell membrane</location>
        <topology>Single-pass type I membrane protein</topology>
    </subcellularLocation>
</comment>
<comment type="PTM">
    <text evidence="1">The N-terminal extracellular domain is heavily glycosylated on serine and threonine residues.</text>
</comment>
<comment type="similarity">
    <text evidence="4">Belongs to the glycophorin-A family.</text>
</comment>
<proteinExistence type="evidence at transcript level"/>
<organism>
    <name type="scientific">Pan troglodytes</name>
    <name type="common">Chimpanzee</name>
    <dbReference type="NCBI Taxonomy" id="9598"/>
    <lineage>
        <taxon>Eukaryota</taxon>
        <taxon>Metazoa</taxon>
        <taxon>Chordata</taxon>
        <taxon>Craniata</taxon>
        <taxon>Vertebrata</taxon>
        <taxon>Euteleostomi</taxon>
        <taxon>Mammalia</taxon>
        <taxon>Eutheria</taxon>
        <taxon>Euarchontoglires</taxon>
        <taxon>Primates</taxon>
        <taxon>Haplorrhini</taxon>
        <taxon>Catarrhini</taxon>
        <taxon>Hominidae</taxon>
        <taxon>Pan</taxon>
    </lineage>
</organism>
<sequence>MYGKIIFVLLLSEIVSISASSTTEVAMHTSTSSSVTKSYISSQTNDKHKGDTYPATLGAHEVSEISVTTVYPPEEDNGEWVQPVHPFSRPAPVVIILIILCVMAGVIGTILLISYGIRLLIKA</sequence>
<name>GLPB_PANTR</name>
<feature type="signal peptide" evidence="1">
    <location>
        <begin position="1"/>
        <end position="19"/>
    </location>
</feature>
<feature type="chain" id="PRO_0000012137" description="Glycophorin-B">
    <location>
        <begin position="20"/>
        <end position="123"/>
    </location>
</feature>
<feature type="transmembrane region" description="Helical" evidence="3">
    <location>
        <begin position="93"/>
        <end position="113"/>
    </location>
</feature>
<accession>Q28914</accession>
<keyword id="KW-1003">Cell membrane</keyword>
<keyword id="KW-0325">Glycoprotein</keyword>
<keyword id="KW-0472">Membrane</keyword>
<keyword id="KW-1185">Reference proteome</keyword>
<keyword id="KW-0730">Sialic acid</keyword>
<keyword id="KW-0732">Signal</keyword>
<keyword id="KW-0812">Transmembrane</keyword>
<keyword id="KW-1133">Transmembrane helix</keyword>
<evidence type="ECO:0000250" key="1"/>
<evidence type="ECO:0000250" key="2">
    <source>
        <dbReference type="UniProtKB" id="P06028"/>
    </source>
</evidence>
<evidence type="ECO:0000255" key="3"/>
<evidence type="ECO:0000305" key="4"/>
<protein>
    <recommendedName>
        <fullName evidence="2">Glycophorin-B</fullName>
    </recommendedName>
    <cdAntigenName>CD235b</cdAntigenName>
</protein>
<dbReference type="EMBL" id="S79726">
    <property type="protein sequence ID" value="AAB35339.1"/>
    <property type="molecule type" value="mRNA"/>
</dbReference>
<dbReference type="SMR" id="Q28914"/>
<dbReference type="STRING" id="9598.ENSPTRP00000087172"/>
<dbReference type="PaxDb" id="9598-ENSPTRP00000059467"/>
<dbReference type="eggNOG" id="ENOG502TKYQ">
    <property type="taxonomic scope" value="Eukaryota"/>
</dbReference>
<dbReference type="InParanoid" id="Q28914"/>
<dbReference type="Proteomes" id="UP000002277">
    <property type="component" value="Unplaced"/>
</dbReference>
<dbReference type="GO" id="GO:0170014">
    <property type="term" value="C:ankyrin-1 complex"/>
    <property type="evidence" value="ECO:0000250"/>
    <property type="project" value="UniProtKB"/>
</dbReference>
<dbReference type="GO" id="GO:0005886">
    <property type="term" value="C:plasma membrane"/>
    <property type="evidence" value="ECO:0000318"/>
    <property type="project" value="GO_Central"/>
</dbReference>
<dbReference type="Gene3D" id="1.20.5.70">
    <property type="match status" value="1"/>
</dbReference>
<dbReference type="InterPro" id="IPR001195">
    <property type="entry name" value="Glycophorin"/>
</dbReference>
<dbReference type="InterPro" id="IPR018938">
    <property type="entry name" value="Glycophorin_CS"/>
</dbReference>
<dbReference type="InterPro" id="IPR049535">
    <property type="entry name" value="GYPA_B"/>
</dbReference>
<dbReference type="PANTHER" id="PTHR13813">
    <property type="entry name" value="GLYCOPHORIN"/>
    <property type="match status" value="1"/>
</dbReference>
<dbReference type="PANTHER" id="PTHR13813:SF2">
    <property type="entry name" value="GLYCOPHORIN-B"/>
    <property type="match status" value="1"/>
</dbReference>
<dbReference type="Pfam" id="PF01102">
    <property type="entry name" value="Glycophorin_A"/>
    <property type="match status" value="1"/>
</dbReference>
<dbReference type="PIRSF" id="PIRSF002466">
    <property type="entry name" value="Glycophorin"/>
    <property type="match status" value="1"/>
</dbReference>
<dbReference type="PROSITE" id="PS00312">
    <property type="entry name" value="GLYCOPHORIN_A"/>
    <property type="match status" value="1"/>
</dbReference>